<organism>
    <name type="scientific">Bos taurus</name>
    <name type="common">Bovine</name>
    <dbReference type="NCBI Taxonomy" id="9913"/>
    <lineage>
        <taxon>Eukaryota</taxon>
        <taxon>Metazoa</taxon>
        <taxon>Chordata</taxon>
        <taxon>Craniata</taxon>
        <taxon>Vertebrata</taxon>
        <taxon>Euteleostomi</taxon>
        <taxon>Mammalia</taxon>
        <taxon>Eutheria</taxon>
        <taxon>Laurasiatheria</taxon>
        <taxon>Artiodactyla</taxon>
        <taxon>Ruminantia</taxon>
        <taxon>Pecora</taxon>
        <taxon>Bovidae</taxon>
        <taxon>Bovinae</taxon>
        <taxon>Bos</taxon>
    </lineage>
</organism>
<feature type="signal peptide" evidence="2">
    <location>
        <begin position="1"/>
        <end position="27"/>
    </location>
</feature>
<feature type="chain" id="PRO_0000314692" description="Cystatin-9">
    <location>
        <begin position="28"/>
        <end position="153"/>
    </location>
</feature>
<comment type="function">
    <text evidence="1">May play a role in hematopoietic differentiation or inflammation.</text>
</comment>
<comment type="subcellular location">
    <subcellularLocation>
        <location>Secreted</location>
    </subcellularLocation>
    <text evidence="1">May be targeted through the Golgi via the secretory pathway.</text>
</comment>
<comment type="similarity">
    <text evidence="3">Belongs to the cystatin family.</text>
</comment>
<keyword id="KW-0646">Protease inhibitor</keyword>
<keyword id="KW-1185">Reference proteome</keyword>
<keyword id="KW-0964">Secreted</keyword>
<keyword id="KW-0732">Signal</keyword>
<keyword id="KW-0789">Thiol protease inhibitor</keyword>
<evidence type="ECO:0000250" key="1"/>
<evidence type="ECO:0000255" key="2"/>
<evidence type="ECO:0000305" key="3"/>
<accession>Q29RH0</accession>
<name>CST9_BOVIN</name>
<gene>
    <name type="primary">CST9</name>
</gene>
<proteinExistence type="evidence at transcript level"/>
<protein>
    <recommendedName>
        <fullName>Cystatin-9</fullName>
    </recommendedName>
</protein>
<reference key="1">
    <citation type="submission" date="2006-02" db="EMBL/GenBank/DDBJ databases">
        <authorList>
            <consortium name="NIH - Mammalian Gene Collection (MGC) project"/>
        </authorList>
    </citation>
    <scope>NUCLEOTIDE SEQUENCE [LARGE SCALE MRNA]</scope>
    <source>
        <strain>Crossbred X Angus</strain>
        <tissue>Liver</tissue>
    </source>
</reference>
<dbReference type="EMBL" id="BC114179">
    <property type="protein sequence ID" value="AAI14180.1"/>
    <property type="molecule type" value="mRNA"/>
</dbReference>
<dbReference type="RefSeq" id="NP_001039372.1">
    <property type="nucleotide sequence ID" value="NM_001045907.2"/>
</dbReference>
<dbReference type="SMR" id="Q29RH0"/>
<dbReference type="FunCoup" id="Q29RH0">
    <property type="interactions" value="8"/>
</dbReference>
<dbReference type="STRING" id="9913.ENSBTAP00000011269"/>
<dbReference type="PaxDb" id="9913-ENSBTAP00000011269"/>
<dbReference type="GeneID" id="505033"/>
<dbReference type="KEGG" id="bta:505033"/>
<dbReference type="eggNOG" id="ENOG502TAJ0">
    <property type="taxonomic scope" value="Eukaryota"/>
</dbReference>
<dbReference type="InParanoid" id="Q29RH0"/>
<dbReference type="OrthoDB" id="9626110at2759"/>
<dbReference type="Proteomes" id="UP000009136">
    <property type="component" value="Unplaced"/>
</dbReference>
<dbReference type="GO" id="GO:0005615">
    <property type="term" value="C:extracellular space"/>
    <property type="evidence" value="ECO:0000318"/>
    <property type="project" value="GO_Central"/>
</dbReference>
<dbReference type="GO" id="GO:0004869">
    <property type="term" value="F:cysteine-type endopeptidase inhibitor activity"/>
    <property type="evidence" value="ECO:0007669"/>
    <property type="project" value="UniProtKB-KW"/>
</dbReference>
<dbReference type="GO" id="GO:0019730">
    <property type="term" value="P:antimicrobial humoral response"/>
    <property type="evidence" value="ECO:0000318"/>
    <property type="project" value="GO_Central"/>
</dbReference>
<dbReference type="CDD" id="cd00042">
    <property type="entry name" value="CY"/>
    <property type="match status" value="1"/>
</dbReference>
<dbReference type="Gene3D" id="3.10.450.10">
    <property type="match status" value="1"/>
</dbReference>
<dbReference type="InterPro" id="IPR043250">
    <property type="entry name" value="CST9-like"/>
</dbReference>
<dbReference type="InterPro" id="IPR000010">
    <property type="entry name" value="Cystatin_dom"/>
</dbReference>
<dbReference type="InterPro" id="IPR046350">
    <property type="entry name" value="Cystatin_sf"/>
</dbReference>
<dbReference type="PANTHER" id="PTHR46945">
    <property type="entry name" value="CYSTATIN-9-LIKE"/>
    <property type="match status" value="1"/>
</dbReference>
<dbReference type="PANTHER" id="PTHR46945:SF1">
    <property type="entry name" value="CYSTATIN-9-LIKE"/>
    <property type="match status" value="1"/>
</dbReference>
<dbReference type="Pfam" id="PF00031">
    <property type="entry name" value="Cystatin"/>
    <property type="match status" value="1"/>
</dbReference>
<dbReference type="SUPFAM" id="SSF54403">
    <property type="entry name" value="Cystatin/monellin"/>
    <property type="match status" value="1"/>
</dbReference>
<sequence>MGRQRRCRWAQPWTLLLLLLGPRLLVTHGWRRKGDKNSENTNILELYLPAVVEYALHVYNMRSQDMNAYKVVRVLRSWLELSEQKEEKGLVFSMELQFARTRCGKFDEDIDNCPFQATPDVNNTITCFFTVDTEPWKTEFQLLNDTCLEGSAE</sequence>